<protein>
    <recommendedName>
        <fullName>Serpin E3</fullName>
    </recommendedName>
</protein>
<proteinExistence type="evidence at protein level"/>
<name>SERP3_HUMAN</name>
<organism>
    <name type="scientific">Homo sapiens</name>
    <name type="common">Human</name>
    <dbReference type="NCBI Taxonomy" id="9606"/>
    <lineage>
        <taxon>Eukaryota</taxon>
        <taxon>Metazoa</taxon>
        <taxon>Chordata</taxon>
        <taxon>Craniata</taxon>
        <taxon>Vertebrata</taxon>
        <taxon>Euteleostomi</taxon>
        <taxon>Mammalia</taxon>
        <taxon>Eutheria</taxon>
        <taxon>Euarchontoglires</taxon>
        <taxon>Primates</taxon>
        <taxon>Haplorrhini</taxon>
        <taxon>Catarrhini</taxon>
        <taxon>Hominidae</taxon>
        <taxon>Homo</taxon>
    </lineage>
</organism>
<gene>
    <name type="primary">SERPINE3</name>
</gene>
<accession>A8MV23</accession>
<accession>B1V8P3</accession>
<comment type="function">
    <text evidence="1">Probable serine protease inhibitor.</text>
</comment>
<comment type="subcellular location">
    <subcellularLocation>
        <location evidence="5">Secreted</location>
    </subcellularLocation>
</comment>
<comment type="alternative products">
    <event type="alternative splicing"/>
    <isoform>
        <id>A8MV23-1</id>
        <name>1</name>
        <sequence type="displayed"/>
    </isoform>
    <isoform>
        <id>A8MV23-2</id>
        <name>2</name>
        <sequence type="described" ref="VSP_037586"/>
    </isoform>
</comment>
<comment type="similarity">
    <text evidence="5">Belongs to the serpin family.</text>
</comment>
<feature type="signal peptide" evidence="2">
    <location>
        <begin position="1"/>
        <end position="20"/>
    </location>
</feature>
<feature type="chain" id="PRO_0000340684" description="Serpin E3">
    <location>
        <begin position="21"/>
        <end position="424"/>
    </location>
</feature>
<feature type="region of interest" description="Disordered" evidence="3">
    <location>
        <begin position="143"/>
        <end position="174"/>
    </location>
</feature>
<feature type="compositionally biased region" description="Polar residues" evidence="3">
    <location>
        <begin position="146"/>
        <end position="157"/>
    </location>
</feature>
<feature type="compositionally biased region" description="Gly residues" evidence="3">
    <location>
        <begin position="163"/>
        <end position="173"/>
    </location>
</feature>
<feature type="site" description="Reactive bond" evidence="2">
    <location>
        <begin position="369"/>
        <end position="370"/>
    </location>
</feature>
<feature type="glycosylation site" description="N-linked (GlcNAc...) asparagine" evidence="2">
    <location>
        <position position="46"/>
    </location>
</feature>
<feature type="splice variant" id="VSP_037586" description="In isoform 2." evidence="4">
    <original>ITVFFDRIQIIYQCLSSNKGSFVHYPLKNKHSF</original>
    <variation>FVFSIGRVSNPLD</variation>
    <location>
        <begin position="392"/>
        <end position="424"/>
    </location>
</feature>
<feature type="sequence variant" id="VAR_044021" description="In dbSNP:rs17790811.">
    <original>D</original>
    <variation>N</variation>
    <location>
        <position position="143"/>
    </location>
</feature>
<sequence length="424" mass="46963">MPPFLITLFLFHSCCLRANGHLREGMTLLKTEFALHLYQSVAACRNETNFVISPAGVSLPLEILQFGAEGSTGQQLADALGYTVHDKRVKDFLHAVYATLPTSSQGTEMELACSLFVQVGTPLSPCFVEHVSWWANSSLEPADLSEPNSTAIQTSEGASRETAGGGPSEGPGGWPWEQVSAAFAQLVLVSTMSFQGTWRKRFSSTDTQILPFTCAYGLVLQVPMMHQTTEVNYGQFQDTAGHQVGVLELPYLGSAVSLFLVLPRDKDTPLSHIEPHLTASTIHLWTTSLRRARMDVFLPRFRIQNQFNLKSILNSWGVTDLFDPLKANLKGISGQDGFYVSEAIHKAKIEVLEEGTKASGATALLLLKRSRIPIFKADRPFIYFLREPNTGITVFFDRIQIIYQCLSSNKGSFVHYPLKNKHSF</sequence>
<reference key="1">
    <citation type="patent" date="2003-06-05" number="WO03046006">
        <title>Polynucleotides encoding nexin-related serine protease inhibitor.</title>
        <authorList>
            <person name="Smolyar A."/>
        </authorList>
    </citation>
    <scope>NUCLEOTIDE SEQUENCE [MRNA] (ISOFORM 1)</scope>
</reference>
<reference key="2">
    <citation type="submission" date="2006-09" db="EMBL/GenBank/DDBJ databases">
        <title>Identification and characterization of a novel human serpin.</title>
        <authorList>
            <person name="Bentele C."/>
            <person name="Ragg H."/>
        </authorList>
    </citation>
    <scope>NUCLEOTIDE SEQUENCE [MRNA] (ISOFORM 2)</scope>
</reference>
<reference key="3">
    <citation type="journal article" date="2004" name="Nature">
        <title>The DNA sequence and analysis of human chromosome 13.</title>
        <authorList>
            <person name="Dunham A."/>
            <person name="Matthews L.H."/>
            <person name="Burton J."/>
            <person name="Ashurst J.L."/>
            <person name="Howe K.L."/>
            <person name="Ashcroft K.J."/>
            <person name="Beare D.M."/>
            <person name="Burford D.C."/>
            <person name="Hunt S.E."/>
            <person name="Griffiths-Jones S."/>
            <person name="Jones M.C."/>
            <person name="Keenan S.J."/>
            <person name="Oliver K."/>
            <person name="Scott C.E."/>
            <person name="Ainscough R."/>
            <person name="Almeida J.P."/>
            <person name="Ambrose K.D."/>
            <person name="Andrews D.T."/>
            <person name="Ashwell R.I.S."/>
            <person name="Babbage A.K."/>
            <person name="Bagguley C.L."/>
            <person name="Bailey J."/>
            <person name="Bannerjee R."/>
            <person name="Barlow K.F."/>
            <person name="Bates K."/>
            <person name="Beasley H."/>
            <person name="Bird C.P."/>
            <person name="Bray-Allen S."/>
            <person name="Brown A.J."/>
            <person name="Brown J.Y."/>
            <person name="Burrill W."/>
            <person name="Carder C."/>
            <person name="Carter N.P."/>
            <person name="Chapman J.C."/>
            <person name="Clamp M.E."/>
            <person name="Clark S.Y."/>
            <person name="Clarke G."/>
            <person name="Clee C.M."/>
            <person name="Clegg S.C."/>
            <person name="Cobley V."/>
            <person name="Collins J.E."/>
            <person name="Corby N."/>
            <person name="Coville G.J."/>
            <person name="Deloukas P."/>
            <person name="Dhami P."/>
            <person name="Dunham I."/>
            <person name="Dunn M."/>
            <person name="Earthrowl M.E."/>
            <person name="Ellington A.G."/>
            <person name="Faulkner L."/>
            <person name="Frankish A.G."/>
            <person name="Frankland J."/>
            <person name="French L."/>
            <person name="Garner P."/>
            <person name="Garnett J."/>
            <person name="Gilbert J.G.R."/>
            <person name="Gilson C.J."/>
            <person name="Ghori J."/>
            <person name="Grafham D.V."/>
            <person name="Gribble S.M."/>
            <person name="Griffiths C."/>
            <person name="Hall R.E."/>
            <person name="Hammond S."/>
            <person name="Harley J.L."/>
            <person name="Hart E.A."/>
            <person name="Heath P.D."/>
            <person name="Howden P.J."/>
            <person name="Huckle E.J."/>
            <person name="Hunt P.J."/>
            <person name="Hunt A.R."/>
            <person name="Johnson C."/>
            <person name="Johnson D."/>
            <person name="Kay M."/>
            <person name="Kimberley A.M."/>
            <person name="King A."/>
            <person name="Laird G.K."/>
            <person name="Langford C.J."/>
            <person name="Lawlor S."/>
            <person name="Leongamornlert D.A."/>
            <person name="Lloyd D.M."/>
            <person name="Lloyd C."/>
            <person name="Loveland J.E."/>
            <person name="Lovell J."/>
            <person name="Martin S."/>
            <person name="Mashreghi-Mohammadi M."/>
            <person name="McLaren S.J."/>
            <person name="McMurray A."/>
            <person name="Milne S."/>
            <person name="Moore M.J.F."/>
            <person name="Nickerson T."/>
            <person name="Palmer S.A."/>
            <person name="Pearce A.V."/>
            <person name="Peck A.I."/>
            <person name="Pelan S."/>
            <person name="Phillimore B."/>
            <person name="Porter K.M."/>
            <person name="Rice C.M."/>
            <person name="Searle S."/>
            <person name="Sehra H.K."/>
            <person name="Shownkeen R."/>
            <person name="Skuce C.D."/>
            <person name="Smith M."/>
            <person name="Steward C.A."/>
            <person name="Sycamore N."/>
            <person name="Tester J."/>
            <person name="Thomas D.W."/>
            <person name="Tracey A."/>
            <person name="Tromans A."/>
            <person name="Tubby B."/>
            <person name="Wall M."/>
            <person name="Wallis J.M."/>
            <person name="West A.P."/>
            <person name="Whitehead S.L."/>
            <person name="Willey D.L."/>
            <person name="Wilming L."/>
            <person name="Wray P.W."/>
            <person name="Wright M.W."/>
            <person name="Young L."/>
            <person name="Coulson A."/>
            <person name="Durbin R.M."/>
            <person name="Hubbard T."/>
            <person name="Sulston J.E."/>
            <person name="Beck S."/>
            <person name="Bentley D.R."/>
            <person name="Rogers J."/>
            <person name="Ross M.T."/>
        </authorList>
    </citation>
    <scope>NUCLEOTIDE SEQUENCE [LARGE SCALE GENOMIC DNA]</scope>
</reference>
<reference key="4">
    <citation type="submission" date="2005-07" db="EMBL/GenBank/DDBJ databases">
        <authorList>
            <person name="Mural R.J."/>
            <person name="Istrail S."/>
            <person name="Sutton G.G."/>
            <person name="Florea L."/>
            <person name="Halpern A.L."/>
            <person name="Mobarry C.M."/>
            <person name="Lippert R."/>
            <person name="Walenz B."/>
            <person name="Shatkay H."/>
            <person name="Dew I."/>
            <person name="Miller J.R."/>
            <person name="Flanigan M.J."/>
            <person name="Edwards N.J."/>
            <person name="Bolanos R."/>
            <person name="Fasulo D."/>
            <person name="Halldorsson B.V."/>
            <person name="Hannenhalli S."/>
            <person name="Turner R."/>
            <person name="Yooseph S."/>
            <person name="Lu F."/>
            <person name="Nusskern D.R."/>
            <person name="Shue B.C."/>
            <person name="Zheng X.H."/>
            <person name="Zhong F."/>
            <person name="Delcher A.L."/>
            <person name="Huson D.H."/>
            <person name="Kravitz S.A."/>
            <person name="Mouchard L."/>
            <person name="Reinert K."/>
            <person name="Remington K.A."/>
            <person name="Clark A.G."/>
            <person name="Waterman M.S."/>
            <person name="Eichler E.E."/>
            <person name="Adams M.D."/>
            <person name="Hunkapiller M.W."/>
            <person name="Myers E.W."/>
            <person name="Venter J.C."/>
        </authorList>
    </citation>
    <scope>NUCLEOTIDE SEQUENCE [LARGE SCALE GENOMIC DNA]</scope>
</reference>
<keyword id="KW-0025">Alternative splicing</keyword>
<keyword id="KW-0325">Glycoprotein</keyword>
<keyword id="KW-0646">Protease inhibitor</keyword>
<keyword id="KW-1267">Proteomics identification</keyword>
<keyword id="KW-1185">Reference proteome</keyword>
<keyword id="KW-0964">Secreted</keyword>
<keyword id="KW-0722">Serine protease inhibitor</keyword>
<keyword id="KW-0732">Signal</keyword>
<dbReference type="EMBL" id="AX772926">
    <property type="protein sequence ID" value="CAE06272.1"/>
    <property type="molecule type" value="mRNA"/>
</dbReference>
<dbReference type="EMBL" id="AM402969">
    <property type="protein sequence ID" value="CAL47031.1"/>
    <property type="molecule type" value="mRNA"/>
</dbReference>
<dbReference type="EMBL" id="AL137780">
    <property type="status" value="NOT_ANNOTATED_CDS"/>
    <property type="molecule type" value="Genomic_DNA"/>
</dbReference>
<dbReference type="EMBL" id="CH471075">
    <property type="protein sequence ID" value="EAX08871.1"/>
    <property type="molecule type" value="Genomic_DNA"/>
</dbReference>
<dbReference type="CCDS" id="CCDS53870.1">
    <molecule id="A8MV23-1"/>
</dbReference>
<dbReference type="CCDS" id="CCDS91808.1">
    <molecule id="A8MV23-2"/>
</dbReference>
<dbReference type="RefSeq" id="NP_001094790.1">
    <molecule id="A8MV23-1"/>
    <property type="nucleotide sequence ID" value="NM_001101320.1"/>
</dbReference>
<dbReference type="RefSeq" id="NP_001373304.1">
    <molecule id="A8MV23-2"/>
    <property type="nucleotide sequence ID" value="NM_001386375.1"/>
</dbReference>
<dbReference type="RefSeq" id="XP_047286500.1">
    <molecule id="A8MV23-1"/>
    <property type="nucleotide sequence ID" value="XM_047430544.1"/>
</dbReference>
<dbReference type="RefSeq" id="XP_047286501.1">
    <molecule id="A8MV23-1"/>
    <property type="nucleotide sequence ID" value="XM_047430545.1"/>
</dbReference>
<dbReference type="RefSeq" id="XP_054230838.1">
    <molecule id="A8MV23-1"/>
    <property type="nucleotide sequence ID" value="XM_054374863.1"/>
</dbReference>
<dbReference type="RefSeq" id="XP_054230839.1">
    <molecule id="A8MV23-1"/>
    <property type="nucleotide sequence ID" value="XM_054374864.1"/>
</dbReference>
<dbReference type="SMR" id="A8MV23"/>
<dbReference type="FunCoup" id="A8MV23">
    <property type="interactions" value="186"/>
</dbReference>
<dbReference type="STRING" id="9606.ENSP00000428316"/>
<dbReference type="MEROPS" id="I04.972"/>
<dbReference type="GlyCosmos" id="A8MV23">
    <property type="glycosylation" value="1 site, No reported glycans"/>
</dbReference>
<dbReference type="GlyGen" id="A8MV23">
    <property type="glycosylation" value="1 site"/>
</dbReference>
<dbReference type="iPTMnet" id="A8MV23"/>
<dbReference type="PhosphoSitePlus" id="A8MV23"/>
<dbReference type="BioMuta" id="SERPINE3"/>
<dbReference type="MassIVE" id="A8MV23"/>
<dbReference type="PaxDb" id="9606-ENSP00000428316"/>
<dbReference type="PeptideAtlas" id="A8MV23"/>
<dbReference type="ProteomicsDB" id="2143">
    <molecule id="A8MV23-1"/>
</dbReference>
<dbReference type="ProteomicsDB" id="2144">
    <molecule id="A8MV23-2"/>
</dbReference>
<dbReference type="TopDownProteomics" id="A8MV23-1">
    <molecule id="A8MV23-1"/>
</dbReference>
<dbReference type="Antibodypedia" id="63264">
    <property type="antibodies" value="10 antibodies from 6 providers"/>
</dbReference>
<dbReference type="DNASU" id="647174"/>
<dbReference type="Ensembl" id="ENST00000400389.5">
    <molecule id="A8MV23-2"/>
    <property type="protein sequence ID" value="ENSP00000441468.1"/>
    <property type="gene ID" value="ENSG00000253309.7"/>
</dbReference>
<dbReference type="Ensembl" id="ENST00000521255.5">
    <molecule id="A8MV23-1"/>
    <property type="protein sequence ID" value="ENSP00000428316.1"/>
    <property type="gene ID" value="ENSG00000253309.7"/>
</dbReference>
<dbReference type="Ensembl" id="ENST00000524365.5">
    <molecule id="A8MV23-2"/>
    <property type="protein sequence ID" value="ENSP00000430755.1"/>
    <property type="gene ID" value="ENSG00000253309.7"/>
</dbReference>
<dbReference type="Ensembl" id="ENST00000681248.1">
    <molecule id="A8MV23-2"/>
    <property type="protein sequence ID" value="ENSP00000506411.1"/>
    <property type="gene ID" value="ENSG00000253309.7"/>
</dbReference>
<dbReference type="GeneID" id="647174"/>
<dbReference type="KEGG" id="hsa:647174"/>
<dbReference type="MANE-Select" id="ENST00000681248.1">
    <molecule id="A8MV23-2"/>
    <property type="protein sequence ID" value="ENSP00000506411.1"/>
    <property type="RefSeq nucleotide sequence ID" value="NM_001386375.1"/>
    <property type="RefSeq protein sequence ID" value="NP_001373304.1"/>
</dbReference>
<dbReference type="UCSC" id="uc001vfh.3">
    <molecule id="A8MV23-1"/>
    <property type="organism name" value="human"/>
</dbReference>
<dbReference type="AGR" id="HGNC:24774"/>
<dbReference type="CTD" id="647174"/>
<dbReference type="GeneCards" id="SERPINE3"/>
<dbReference type="HGNC" id="HGNC:24774">
    <property type="gene designation" value="SERPINE3"/>
</dbReference>
<dbReference type="HPA" id="ENSG00000253309">
    <property type="expression patterns" value="Tissue enhanced (pancreas, retina)"/>
</dbReference>
<dbReference type="MIM" id="620989">
    <property type="type" value="gene"/>
</dbReference>
<dbReference type="neXtProt" id="NX_A8MV23"/>
<dbReference type="OpenTargets" id="ENSG00000253309"/>
<dbReference type="PharmGKB" id="PA164725650"/>
<dbReference type="VEuPathDB" id="HostDB:ENSG00000253309"/>
<dbReference type="eggNOG" id="KOG2392">
    <property type="taxonomic scope" value="Eukaryota"/>
</dbReference>
<dbReference type="GeneTree" id="ENSGT00940000160941"/>
<dbReference type="HOGENOM" id="CLU_023330_0_4_1"/>
<dbReference type="InParanoid" id="A8MV23"/>
<dbReference type="OMA" id="KGNCISY"/>
<dbReference type="OrthoDB" id="8179360at2759"/>
<dbReference type="PAN-GO" id="A8MV23">
    <property type="GO annotations" value="3 GO annotations based on evolutionary models"/>
</dbReference>
<dbReference type="PhylomeDB" id="A8MV23"/>
<dbReference type="TreeFam" id="TF352620"/>
<dbReference type="PathwayCommons" id="A8MV23"/>
<dbReference type="BioGRID-ORCS" id="647174">
    <property type="hits" value="6 hits in 1140 CRISPR screens"/>
</dbReference>
<dbReference type="ChiTaRS" id="SERPINE3">
    <property type="organism name" value="human"/>
</dbReference>
<dbReference type="GenomeRNAi" id="647174"/>
<dbReference type="Pharos" id="A8MV23">
    <property type="development level" value="Tdark"/>
</dbReference>
<dbReference type="PRO" id="PR:A8MV23"/>
<dbReference type="Proteomes" id="UP000005640">
    <property type="component" value="Chromosome 13"/>
</dbReference>
<dbReference type="RNAct" id="A8MV23">
    <property type="molecule type" value="protein"/>
</dbReference>
<dbReference type="Bgee" id="ENSG00000253309">
    <property type="expression patterns" value="Expressed in primordial germ cell in gonad and 91 other cell types or tissues"/>
</dbReference>
<dbReference type="ExpressionAtlas" id="A8MV23">
    <property type="expression patterns" value="baseline and differential"/>
</dbReference>
<dbReference type="GO" id="GO:0005615">
    <property type="term" value="C:extracellular space"/>
    <property type="evidence" value="ECO:0000318"/>
    <property type="project" value="GO_Central"/>
</dbReference>
<dbReference type="GO" id="GO:0004867">
    <property type="term" value="F:serine-type endopeptidase inhibitor activity"/>
    <property type="evidence" value="ECO:0000318"/>
    <property type="project" value="GO_Central"/>
</dbReference>
<dbReference type="CDD" id="cd19574">
    <property type="entry name" value="serpinE3"/>
    <property type="match status" value="1"/>
</dbReference>
<dbReference type="Gene3D" id="2.30.39.10">
    <property type="entry name" value="Alpha-1-antitrypsin, domain 1"/>
    <property type="match status" value="1"/>
</dbReference>
<dbReference type="Gene3D" id="3.30.497.10">
    <property type="entry name" value="Antithrombin, subunit I, domain 2"/>
    <property type="match status" value="1"/>
</dbReference>
<dbReference type="InterPro" id="IPR023795">
    <property type="entry name" value="Serpin_CS"/>
</dbReference>
<dbReference type="InterPro" id="IPR023796">
    <property type="entry name" value="Serpin_dom"/>
</dbReference>
<dbReference type="InterPro" id="IPR031172">
    <property type="entry name" value="Serpin_E3"/>
</dbReference>
<dbReference type="InterPro" id="IPR000215">
    <property type="entry name" value="Serpin_fam"/>
</dbReference>
<dbReference type="InterPro" id="IPR036186">
    <property type="entry name" value="Serpin_sf"/>
</dbReference>
<dbReference type="InterPro" id="IPR042178">
    <property type="entry name" value="Serpin_sf_1"/>
</dbReference>
<dbReference type="InterPro" id="IPR042185">
    <property type="entry name" value="Serpin_sf_2"/>
</dbReference>
<dbReference type="PANTHER" id="PTHR11461">
    <property type="entry name" value="SERINE PROTEASE INHIBITOR, SERPIN"/>
    <property type="match status" value="1"/>
</dbReference>
<dbReference type="PANTHER" id="PTHR11461:SF129">
    <property type="entry name" value="SERPIN E3"/>
    <property type="match status" value="1"/>
</dbReference>
<dbReference type="Pfam" id="PF00079">
    <property type="entry name" value="Serpin"/>
    <property type="match status" value="1"/>
</dbReference>
<dbReference type="SMART" id="SM00093">
    <property type="entry name" value="SERPIN"/>
    <property type="match status" value="1"/>
</dbReference>
<dbReference type="SUPFAM" id="SSF56574">
    <property type="entry name" value="Serpins"/>
    <property type="match status" value="1"/>
</dbReference>
<dbReference type="PROSITE" id="PS00284">
    <property type="entry name" value="SERPIN"/>
    <property type="match status" value="1"/>
</dbReference>
<evidence type="ECO:0000250" key="1"/>
<evidence type="ECO:0000255" key="2"/>
<evidence type="ECO:0000256" key="3">
    <source>
        <dbReference type="SAM" id="MobiDB-lite"/>
    </source>
</evidence>
<evidence type="ECO:0000303" key="4">
    <source ref="2"/>
</evidence>
<evidence type="ECO:0000305" key="5"/>